<dbReference type="EC" id="3.5.1.26"/>
<dbReference type="EMBL" id="CH479183">
    <property type="protein sequence ID" value="EDW35572.1"/>
    <property type="molecule type" value="Genomic_DNA"/>
</dbReference>
<dbReference type="SMR" id="B4GGF2"/>
<dbReference type="STRING" id="7234.B4GGF2"/>
<dbReference type="EnsemblMetazoa" id="FBtr0182762">
    <property type="protein sequence ID" value="FBpp0181254"/>
    <property type="gene ID" value="FBgn0154751"/>
</dbReference>
<dbReference type="EnsemblMetazoa" id="XM_002017697.2">
    <property type="protein sequence ID" value="XP_002017733.1"/>
    <property type="gene ID" value="LOC6592696"/>
</dbReference>
<dbReference type="GeneID" id="6592696"/>
<dbReference type="KEGG" id="dpe:6592696"/>
<dbReference type="eggNOG" id="KOG1593">
    <property type="taxonomic scope" value="Eukaryota"/>
</dbReference>
<dbReference type="HOGENOM" id="CLU_021603_0_0_1"/>
<dbReference type="OMA" id="YKPIINI"/>
<dbReference type="OrthoDB" id="188713at2759"/>
<dbReference type="PhylomeDB" id="B4GGF2"/>
<dbReference type="Proteomes" id="UP000008744">
    <property type="component" value="Unassembled WGS sequence"/>
</dbReference>
<dbReference type="GO" id="GO:0005764">
    <property type="term" value="C:lysosome"/>
    <property type="evidence" value="ECO:0000250"/>
    <property type="project" value="UniProtKB"/>
</dbReference>
<dbReference type="GO" id="GO:0003948">
    <property type="term" value="F:N4-(beta-N-acetylglucosaminyl)-L-asparaginase activity"/>
    <property type="evidence" value="ECO:0000250"/>
    <property type="project" value="UniProtKB"/>
</dbReference>
<dbReference type="GO" id="GO:0008233">
    <property type="term" value="F:peptidase activity"/>
    <property type="evidence" value="ECO:0007669"/>
    <property type="project" value="UniProtKB-KW"/>
</dbReference>
<dbReference type="GO" id="GO:0006517">
    <property type="term" value="P:protein deglycosylation"/>
    <property type="evidence" value="ECO:0000250"/>
    <property type="project" value="UniProtKB"/>
</dbReference>
<dbReference type="GO" id="GO:0006508">
    <property type="term" value="P:proteolysis"/>
    <property type="evidence" value="ECO:0007669"/>
    <property type="project" value="UniProtKB-KW"/>
</dbReference>
<dbReference type="CDD" id="cd04513">
    <property type="entry name" value="Glycosylasparaginase"/>
    <property type="match status" value="1"/>
</dbReference>
<dbReference type="FunFam" id="3.60.20.30:FF:000003">
    <property type="entry name" value="N(4)-(Beta-N-acetylglucosaminyl)-L-asparaginase isoform X1"/>
    <property type="match status" value="1"/>
</dbReference>
<dbReference type="Gene3D" id="3.60.20.30">
    <property type="entry name" value="(Glycosyl)asparaginase"/>
    <property type="match status" value="1"/>
</dbReference>
<dbReference type="InterPro" id="IPR029055">
    <property type="entry name" value="Ntn_hydrolases_N"/>
</dbReference>
<dbReference type="InterPro" id="IPR000246">
    <property type="entry name" value="Peptidase_T2"/>
</dbReference>
<dbReference type="PANTHER" id="PTHR10188">
    <property type="entry name" value="L-ASPARAGINASE"/>
    <property type="match status" value="1"/>
</dbReference>
<dbReference type="PANTHER" id="PTHR10188:SF6">
    <property type="entry name" value="N(4)-(BETA-N-ACETYLGLUCOSAMINYL)-L-ASPARAGINASE"/>
    <property type="match status" value="1"/>
</dbReference>
<dbReference type="Pfam" id="PF01112">
    <property type="entry name" value="Asparaginase_2"/>
    <property type="match status" value="1"/>
</dbReference>
<dbReference type="SUPFAM" id="SSF56235">
    <property type="entry name" value="N-terminal nucleophile aminohydrolases (Ntn hydrolases)"/>
    <property type="match status" value="1"/>
</dbReference>
<comment type="function">
    <text evidence="2">Cleaves the GlcNAc-Asn bond which joins oligosaccharides to the peptide of asparagine-linked glycoproteins.</text>
</comment>
<comment type="catalytic activity">
    <reaction evidence="2">
        <text>N(4)-(beta-N-acetyl-D-glucosaminyl)-L-asparagine + H2O = N-acetyl-beta-D-glucosaminylamine + L-aspartate + H(+)</text>
        <dbReference type="Rhea" id="RHEA:11544"/>
        <dbReference type="ChEBI" id="CHEBI:15377"/>
        <dbReference type="ChEBI" id="CHEBI:15378"/>
        <dbReference type="ChEBI" id="CHEBI:15947"/>
        <dbReference type="ChEBI" id="CHEBI:29991"/>
        <dbReference type="ChEBI" id="CHEBI:58080"/>
        <dbReference type="EC" id="3.5.1.26"/>
    </reaction>
</comment>
<comment type="subunit">
    <text evidence="2">Heterotetramer of two alpha and two beta chains arranged as a dimer of alpha/beta heterodimers.</text>
</comment>
<comment type="PTM">
    <text evidence="1">Cleaved into an alpha and beta chain by autocatalysis; this activates the enzyme. The N-terminal residue of the beta subunit is responsible for the nucleophile hydrolase activity (By similarity).</text>
</comment>
<comment type="similarity">
    <text evidence="3">Belongs to the Ntn-hydrolase family.</text>
</comment>
<feature type="signal peptide" evidence="3">
    <location>
        <begin position="1"/>
        <end position="20"/>
    </location>
</feature>
<feature type="chain" id="PRO_0000384131" description="Glycosylasparaginase alpha chain" evidence="2">
    <location>
        <begin position="21"/>
        <end position="239"/>
    </location>
</feature>
<feature type="chain" id="PRO_0000384132" description="Glycosylasparaginase beta chain" evidence="2">
    <location>
        <begin position="240"/>
        <end position="388"/>
    </location>
</feature>
<feature type="active site" description="Nucleophile" evidence="2">
    <location>
        <position position="240"/>
    </location>
</feature>
<feature type="binding site" evidence="1">
    <location>
        <begin position="268"/>
        <end position="271"/>
    </location>
    <ligand>
        <name>substrate</name>
    </ligand>
</feature>
<feature type="binding site" evidence="1">
    <location>
        <begin position="291"/>
        <end position="294"/>
    </location>
    <ligand>
        <name>substrate</name>
    </ligand>
</feature>
<feature type="disulfide bond" evidence="2">
    <location>
        <begin position="94"/>
        <end position="99"/>
    </location>
</feature>
<feature type="disulfide bond" evidence="2">
    <location>
        <begin position="193"/>
        <end position="209"/>
    </location>
</feature>
<feature type="disulfide bond" evidence="2">
    <location>
        <begin position="351"/>
        <end position="378"/>
    </location>
</feature>
<sequence>MYKAQYLWLFGLVLISRSATERTTPKINFTTVVGLKTTPAMRSSSASSLGGSLPMVINTWNFTDANFLAWRILNVTQGGLRQTRNAVVEGCTRCEQQQCDRTVGYGGSPDELGETTLDAMIMDGSSMDVGAVAGLRGIKDAIRVARHVLEHTKHSILVGDLASQFAQAMGFRSESLATPESKAMWMEWTAANCQPNFWRNVHPDPSISCGPYKPKATPLTRWKEDRARTEYSIGHLNHDTIGMIAIDAANNIHAGTSSNGARHKIPGRVGDSPIPGAGAYADNEVGAAVATGDGDIMMRFLPTLLAVEAMRAGKKPAEAAEVGIRRISKHYKDFSGAVIAVDRLGQYGAACYGMTEFPFVVSNPSKTDIPSRQESVKCITGKEAVNVV</sequence>
<accession>B4GGF2</accession>
<organism>
    <name type="scientific">Drosophila persimilis</name>
    <name type="common">Fruit fly</name>
    <dbReference type="NCBI Taxonomy" id="7234"/>
    <lineage>
        <taxon>Eukaryota</taxon>
        <taxon>Metazoa</taxon>
        <taxon>Ecdysozoa</taxon>
        <taxon>Arthropoda</taxon>
        <taxon>Hexapoda</taxon>
        <taxon>Insecta</taxon>
        <taxon>Pterygota</taxon>
        <taxon>Neoptera</taxon>
        <taxon>Endopterygota</taxon>
        <taxon>Diptera</taxon>
        <taxon>Brachycera</taxon>
        <taxon>Muscomorpha</taxon>
        <taxon>Ephydroidea</taxon>
        <taxon>Drosophilidae</taxon>
        <taxon>Drosophila</taxon>
        <taxon>Sophophora</taxon>
    </lineage>
</organism>
<evidence type="ECO:0000250" key="1"/>
<evidence type="ECO:0000250" key="2">
    <source>
        <dbReference type="UniProtKB" id="P20933"/>
    </source>
</evidence>
<evidence type="ECO:0000255" key="3"/>
<evidence type="ECO:0000312" key="4">
    <source>
        <dbReference type="EMBL" id="EDW35572.1"/>
    </source>
</evidence>
<name>ASPG1_DROPE</name>
<gene>
    <name type="ORF">GL17147</name>
</gene>
<proteinExistence type="inferred from homology"/>
<reference evidence="4" key="1">
    <citation type="journal article" date="2007" name="Nature">
        <title>Evolution of genes and genomes on the Drosophila phylogeny.</title>
        <authorList>
            <consortium name="Drosophila 12 genomes consortium"/>
        </authorList>
    </citation>
    <scope>NUCLEOTIDE SEQUENCE [LARGE SCALE GENOMIC DNA]</scope>
    <source>
        <strain>MSH-3 / Tucson 14011-0111.49</strain>
    </source>
</reference>
<keyword id="KW-0068">Autocatalytic cleavage</keyword>
<keyword id="KW-1015">Disulfide bond</keyword>
<keyword id="KW-0378">Hydrolase</keyword>
<keyword id="KW-0645">Protease</keyword>
<keyword id="KW-1185">Reference proteome</keyword>
<keyword id="KW-0732">Signal</keyword>
<protein>
    <recommendedName>
        <fullName evidence="2">Putative N(4)-(beta-N-acetylglucosaminyl)-L-asparaginase GL17147</fullName>
        <ecNumber>3.5.1.26</ecNumber>
    </recommendedName>
    <alternativeName>
        <fullName evidence="2">Aspartylglucosaminidase</fullName>
        <shortName evidence="2">AGA</shortName>
    </alternativeName>
    <alternativeName>
        <fullName evidence="2">Glycosylasparaginase</fullName>
    </alternativeName>
    <alternativeName>
        <fullName evidence="2">N4-(N-acetyl-beta-glucosaminyl)-L-asparagine amidase</fullName>
    </alternativeName>
    <component>
        <recommendedName>
            <fullName evidence="2">Glycosylasparaginase alpha chain</fullName>
        </recommendedName>
    </component>
    <component>
        <recommendedName>
            <fullName evidence="2">Glycosylasparaginase beta chain</fullName>
        </recommendedName>
    </component>
</protein>